<name>OBP2_RABIT</name>
<feature type="peptide" id="PRO_0000421857" description="Odorant-binding protein 2" evidence="2">
    <location>
        <begin position="1"/>
        <end position="18" status="greater than"/>
    </location>
</feature>
<feature type="non-terminal residue" evidence="3">
    <location>
        <position position="18"/>
    </location>
</feature>
<comment type="function">
    <text evidence="2">Binds the chemical odorant, 2-isobutyl-3-methoxypyrazine.</text>
</comment>
<comment type="subunit">
    <text evidence="2">Monomer.</text>
</comment>
<comment type="similarity">
    <text evidence="1">Belongs to the calycin superfamily. Lipocalin family.</text>
</comment>
<protein>
    <recommendedName>
        <fullName>Odorant-binding protein 2</fullName>
    </recommendedName>
    <alternativeName>
        <fullName evidence="3">Odorant-binding protein II</fullName>
        <shortName evidence="3">OBP-II</shortName>
    </alternativeName>
</protein>
<sequence length="18" mass="1831">VDPAQVSGSWRTAAIASD</sequence>
<proteinExistence type="evidence at protein level"/>
<reference evidence="4" key="1">
    <citation type="journal article" date="1997" name="Chem. Senses">
        <title>Three odorant-binding proteins from rabbit nasal mucosa.</title>
        <authorList>
            <person name="Garibotti M."/>
            <person name="Navarrini A."/>
            <person name="Pisanelli A.M."/>
            <person name="Pelosi P."/>
        </authorList>
    </citation>
    <scope>PROTEIN SEQUENCE</scope>
    <scope>FUNCTION</scope>
    <scope>SUBUNIT</scope>
    <source>
        <tissue evidence="2">Nasal mucosa</tissue>
    </source>
</reference>
<keyword id="KW-0903">Direct protein sequencing</keyword>
<keyword id="KW-0552">Olfaction</keyword>
<keyword id="KW-1185">Reference proteome</keyword>
<keyword id="KW-0716">Sensory transduction</keyword>
<keyword id="KW-0813">Transport</keyword>
<dbReference type="Allergome" id="498">
    <property type="allergen name" value="Ory c 1"/>
</dbReference>
<dbReference type="InParanoid" id="C0HJA6"/>
<dbReference type="Proteomes" id="UP000001811">
    <property type="component" value="Unplaced"/>
</dbReference>
<dbReference type="GO" id="GO:0007608">
    <property type="term" value="P:sensory perception of smell"/>
    <property type="evidence" value="ECO:0007669"/>
    <property type="project" value="UniProtKB-KW"/>
</dbReference>
<dbReference type="PROSITE" id="PS00213">
    <property type="entry name" value="LIPOCALIN"/>
    <property type="match status" value="1"/>
</dbReference>
<evidence type="ECO:0000255" key="1"/>
<evidence type="ECO:0000269" key="2">
    <source>
    </source>
</evidence>
<evidence type="ECO:0000303" key="3">
    <source>
    </source>
</evidence>
<evidence type="ECO:0000305" key="4"/>
<accession>C0HJA6</accession>
<organism>
    <name type="scientific">Oryctolagus cuniculus</name>
    <name type="common">Rabbit</name>
    <dbReference type="NCBI Taxonomy" id="9986"/>
    <lineage>
        <taxon>Eukaryota</taxon>
        <taxon>Metazoa</taxon>
        <taxon>Chordata</taxon>
        <taxon>Craniata</taxon>
        <taxon>Vertebrata</taxon>
        <taxon>Euteleostomi</taxon>
        <taxon>Mammalia</taxon>
        <taxon>Eutheria</taxon>
        <taxon>Euarchontoglires</taxon>
        <taxon>Glires</taxon>
        <taxon>Lagomorpha</taxon>
        <taxon>Leporidae</taxon>
        <taxon>Oryctolagus</taxon>
    </lineage>
</organism>